<protein>
    <recommendedName>
        <fullName>Ventral anterior homeobox 1</fullName>
    </recommendedName>
</protein>
<name>VAX1_CHICK</name>
<comment type="function">
    <text evidence="3">Transcription factor that plays a role in establishing dorsal-ventral polarity in the neural retina.</text>
</comment>
<comment type="subcellular location">
    <subcellularLocation>
        <location evidence="1">Nucleus</location>
    </subcellularLocation>
</comment>
<comment type="developmental stage">
    <text evidence="3">First detected within the ventral eye at Hamburger-Hamilton (HH) stage 14 as the optic vesicle invaginates. Expression restricted to the ventral retina at HH stage 22 and at 4 dpc as well as later in development.</text>
</comment>
<comment type="similarity">
    <text evidence="4">Belongs to the EMX homeobox family.</text>
</comment>
<comment type="sequence caution" evidence="4">
    <conflict type="frameshift">
        <sequence resource="EMBL-CDS" id="AAF20017"/>
    </conflict>
</comment>
<gene>
    <name type="primary">VAX1</name>
    <name type="synonym">VAX</name>
</gene>
<dbReference type="EMBL" id="AF117299">
    <property type="protein sequence ID" value="AAF20017.1"/>
    <property type="status" value="ALT_FRAME"/>
    <property type="molecule type" value="mRNA"/>
</dbReference>
<dbReference type="EMBL" id="AB032248">
    <property type="protein sequence ID" value="BAA84282.1"/>
    <property type="molecule type" value="mRNA"/>
</dbReference>
<dbReference type="RefSeq" id="NP_990130.2">
    <property type="nucleotide sequence ID" value="NM_204799.2"/>
</dbReference>
<dbReference type="SMR" id="Q9PVN2"/>
<dbReference type="FunCoup" id="Q9PVN2">
    <property type="interactions" value="146"/>
</dbReference>
<dbReference type="STRING" id="9031.ENSGALP00000015056"/>
<dbReference type="PaxDb" id="9031-ENSGALP00000015056"/>
<dbReference type="GeneID" id="395582"/>
<dbReference type="KEGG" id="gga:395582"/>
<dbReference type="CTD" id="11023"/>
<dbReference type="VEuPathDB" id="HostDB:geneid_395582"/>
<dbReference type="eggNOG" id="KOG0843">
    <property type="taxonomic scope" value="Eukaryota"/>
</dbReference>
<dbReference type="HOGENOM" id="CLU_071850_0_0_1"/>
<dbReference type="InParanoid" id="Q9PVN2"/>
<dbReference type="OrthoDB" id="6159439at2759"/>
<dbReference type="PhylomeDB" id="Q9PVN2"/>
<dbReference type="PRO" id="PR:Q9PVN2"/>
<dbReference type="Proteomes" id="UP000000539">
    <property type="component" value="Unassembled WGS sequence"/>
</dbReference>
<dbReference type="GO" id="GO:0005634">
    <property type="term" value="C:nucleus"/>
    <property type="evidence" value="ECO:0000318"/>
    <property type="project" value="GO_Central"/>
</dbReference>
<dbReference type="GO" id="GO:0000981">
    <property type="term" value="F:DNA-binding transcription factor activity, RNA polymerase II-specific"/>
    <property type="evidence" value="ECO:0000318"/>
    <property type="project" value="GO_Central"/>
</dbReference>
<dbReference type="GO" id="GO:0000978">
    <property type="term" value="F:RNA polymerase II cis-regulatory region sequence-specific DNA binding"/>
    <property type="evidence" value="ECO:0000318"/>
    <property type="project" value="GO_Central"/>
</dbReference>
<dbReference type="GO" id="GO:0007420">
    <property type="term" value="P:brain development"/>
    <property type="evidence" value="ECO:0000318"/>
    <property type="project" value="GO_Central"/>
</dbReference>
<dbReference type="GO" id="GO:0007417">
    <property type="term" value="P:central nervous system development"/>
    <property type="evidence" value="ECO:0000318"/>
    <property type="project" value="GO_Central"/>
</dbReference>
<dbReference type="GO" id="GO:0030182">
    <property type="term" value="P:neuron differentiation"/>
    <property type="evidence" value="ECO:0000318"/>
    <property type="project" value="GO_Central"/>
</dbReference>
<dbReference type="GO" id="GO:0006357">
    <property type="term" value="P:regulation of transcription by RNA polymerase II"/>
    <property type="evidence" value="ECO:0000318"/>
    <property type="project" value="GO_Central"/>
</dbReference>
<dbReference type="CDD" id="cd00086">
    <property type="entry name" value="homeodomain"/>
    <property type="match status" value="1"/>
</dbReference>
<dbReference type="FunFam" id="1.10.10.60:FF:000375">
    <property type="entry name" value="Ventral anterior homeobox 1"/>
    <property type="match status" value="1"/>
</dbReference>
<dbReference type="Gene3D" id="1.10.10.60">
    <property type="entry name" value="Homeodomain-like"/>
    <property type="match status" value="1"/>
</dbReference>
<dbReference type="InterPro" id="IPR050877">
    <property type="entry name" value="EMX-VAX-Noto_Homeobox_TFs"/>
</dbReference>
<dbReference type="InterPro" id="IPR001356">
    <property type="entry name" value="HD"/>
</dbReference>
<dbReference type="InterPro" id="IPR017970">
    <property type="entry name" value="Homeobox_CS"/>
</dbReference>
<dbReference type="InterPro" id="IPR009057">
    <property type="entry name" value="Homeodomain-like_sf"/>
</dbReference>
<dbReference type="InterPro" id="IPR000047">
    <property type="entry name" value="HTH_motif"/>
</dbReference>
<dbReference type="PANTHER" id="PTHR24339">
    <property type="entry name" value="HOMEOBOX PROTEIN EMX-RELATED"/>
    <property type="match status" value="1"/>
</dbReference>
<dbReference type="PANTHER" id="PTHR24339:SF32">
    <property type="entry name" value="VENTRAL ANTERIOR HOMEOBOX 1"/>
    <property type="match status" value="1"/>
</dbReference>
<dbReference type="Pfam" id="PF00046">
    <property type="entry name" value="Homeodomain"/>
    <property type="match status" value="1"/>
</dbReference>
<dbReference type="PRINTS" id="PR00031">
    <property type="entry name" value="HTHREPRESSR"/>
</dbReference>
<dbReference type="SMART" id="SM00389">
    <property type="entry name" value="HOX"/>
    <property type="match status" value="1"/>
</dbReference>
<dbReference type="SUPFAM" id="SSF46689">
    <property type="entry name" value="Homeodomain-like"/>
    <property type="match status" value="1"/>
</dbReference>
<dbReference type="PROSITE" id="PS00027">
    <property type="entry name" value="HOMEOBOX_1"/>
    <property type="match status" value="1"/>
</dbReference>
<dbReference type="PROSITE" id="PS50071">
    <property type="entry name" value="HOMEOBOX_2"/>
    <property type="match status" value="1"/>
</dbReference>
<evidence type="ECO:0000255" key="1">
    <source>
        <dbReference type="PROSITE-ProRule" id="PRU00108"/>
    </source>
</evidence>
<evidence type="ECO:0000256" key="2">
    <source>
        <dbReference type="SAM" id="MobiDB-lite"/>
    </source>
</evidence>
<evidence type="ECO:0000269" key="3">
    <source>
    </source>
</evidence>
<evidence type="ECO:0000305" key="4"/>
<organism>
    <name type="scientific">Gallus gallus</name>
    <name type="common">Chicken</name>
    <dbReference type="NCBI Taxonomy" id="9031"/>
    <lineage>
        <taxon>Eukaryota</taxon>
        <taxon>Metazoa</taxon>
        <taxon>Chordata</taxon>
        <taxon>Craniata</taxon>
        <taxon>Vertebrata</taxon>
        <taxon>Euteleostomi</taxon>
        <taxon>Archelosauria</taxon>
        <taxon>Archosauria</taxon>
        <taxon>Dinosauria</taxon>
        <taxon>Saurischia</taxon>
        <taxon>Theropoda</taxon>
        <taxon>Coelurosauria</taxon>
        <taxon>Aves</taxon>
        <taxon>Neognathae</taxon>
        <taxon>Galloanserae</taxon>
        <taxon>Galliformes</taxon>
        <taxon>Phasianidae</taxon>
        <taxon>Phasianinae</taxon>
        <taxon>Gallus</taxon>
    </lineage>
</organism>
<proteinExistence type="evidence at transcript level"/>
<accession>Q9PVN2</accession>
<accession>Q9PTR3</accession>
<reference key="1">
    <citation type="journal article" date="1999" name="Neuron">
        <title>Misexpression of the Emx-related homeobox genes cVax and mVax2 ventralizes the retina and perturbs the retinotectal map.</title>
        <authorList>
            <person name="Schulte D."/>
            <person name="Furukawa T."/>
            <person name="Peters M.A."/>
            <person name="Kozak C.A."/>
            <person name="Cepko C.L."/>
        </authorList>
    </citation>
    <scope>NUCLEOTIDE SEQUENCE [MRNA]</scope>
    <scope>FUNCTION</scope>
    <scope>DEVELOPMENTAL STAGE</scope>
    <source>
        <tissue>Retina</tissue>
    </source>
</reference>
<reference key="2">
    <citation type="submission" date="1999-09" db="EMBL/GenBank/DDBJ databases">
        <title>Chick Vax homeobox gene.</title>
        <authorList>
            <person name="Kanae O."/>
            <person name="Takahashi N."/>
        </authorList>
    </citation>
    <scope>NUCLEOTIDE SEQUENCE [MRNA]</scope>
</reference>
<feature type="chain" id="PRO_0000240525" description="Ventral anterior homeobox 1">
    <location>
        <begin position="1"/>
        <end position="327"/>
    </location>
</feature>
<feature type="DNA-binding region" description="Homeobox" evidence="1">
    <location>
        <begin position="99"/>
        <end position="158"/>
    </location>
</feature>
<feature type="region of interest" description="Disordered" evidence="2">
    <location>
        <begin position="1"/>
        <end position="41"/>
    </location>
</feature>
<feature type="region of interest" description="Disordered" evidence="2">
    <location>
        <begin position="230"/>
        <end position="249"/>
    </location>
</feature>
<feature type="compositionally biased region" description="Basic and acidic residues" evidence="2">
    <location>
        <begin position="1"/>
        <end position="34"/>
    </location>
</feature>
<feature type="compositionally biased region" description="Low complexity" evidence="2">
    <location>
        <begin position="230"/>
        <end position="245"/>
    </location>
</feature>
<feature type="sequence conflict" description="In Ref. 1." evidence="4" ref="1">
    <original>A</original>
    <variation>T</variation>
    <location>
        <position position="203"/>
    </location>
</feature>
<feature type="sequence conflict" description="In Ref. 1." evidence="4" ref="1">
    <location>
        <begin position="229"/>
        <end position="230"/>
    </location>
</feature>
<feature type="sequence conflict" description="In Ref. 1; AAF20017." evidence="4" ref="1">
    <original>A</original>
    <variation>T</variation>
    <location>
        <position position="256"/>
    </location>
</feature>
<sequence>MFGKQDKMDVRCSTETEANRVSKNGHKEGKDSKGAEGNISTSFLKEQQGTFSASAATEDCNKSKSGSADPDYCRRILVRDAKGSIREIILPKGLDLDRPKRTRTSFTAEQLYRLEMEFQRCQYVVGRERTELARQLNLSETQVKVWFQNRRTKQKKDQGKDSELRSVVSETAATCSVLRLLEQGRLLSPPGLPGLLPPCASGALGSALRGPGLAAGSGTAAAAAAAAAAAPAGGSPHPPSAGTAAGPPPPAALHGAAAAAAGHGLFGLPVPTLLGSVAGRLSSAPLAVAGSLAGNLQELSARYLSSSAFEPYSRTNNKESAEKKALD</sequence>
<keyword id="KW-0217">Developmental protein</keyword>
<keyword id="KW-0238">DNA-binding</keyword>
<keyword id="KW-0371">Homeobox</keyword>
<keyword id="KW-0539">Nucleus</keyword>
<keyword id="KW-1185">Reference proteome</keyword>
<keyword id="KW-0804">Transcription</keyword>
<keyword id="KW-0805">Transcription regulation</keyword>